<proteinExistence type="inferred from homology"/>
<name>MTFA_SHISS</name>
<reference key="1">
    <citation type="journal article" date="2005" name="Nucleic Acids Res.">
        <title>Genome dynamics and diversity of Shigella species, the etiologic agents of bacillary dysentery.</title>
        <authorList>
            <person name="Yang F."/>
            <person name="Yang J."/>
            <person name="Zhang X."/>
            <person name="Chen L."/>
            <person name="Jiang Y."/>
            <person name="Yan Y."/>
            <person name="Tang X."/>
            <person name="Wang J."/>
            <person name="Xiong Z."/>
            <person name="Dong J."/>
            <person name="Xue Y."/>
            <person name="Zhu Y."/>
            <person name="Xu X."/>
            <person name="Sun L."/>
            <person name="Chen S."/>
            <person name="Nie H."/>
            <person name="Peng J."/>
            <person name="Xu J."/>
            <person name="Wang Y."/>
            <person name="Yuan Z."/>
            <person name="Wen Y."/>
            <person name="Yao Z."/>
            <person name="Shen Y."/>
            <person name="Qiang B."/>
            <person name="Hou Y."/>
            <person name="Yu J."/>
            <person name="Jin Q."/>
        </authorList>
    </citation>
    <scope>NUCLEOTIDE SEQUENCE [LARGE SCALE GENOMIC DNA]</scope>
    <source>
        <strain>Ss046</strain>
    </source>
</reference>
<dbReference type="EC" id="3.4.11.-" evidence="1"/>
<dbReference type="EMBL" id="CP000038">
    <property type="protein sequence ID" value="AAZ88697.1"/>
    <property type="status" value="ALT_INIT"/>
    <property type="molecule type" value="Genomic_DNA"/>
</dbReference>
<dbReference type="RefSeq" id="WP_001392298.1">
    <property type="nucleotide sequence ID" value="NC_007384.1"/>
</dbReference>
<dbReference type="SMR" id="Q3Z0L5"/>
<dbReference type="MEROPS" id="M90.001"/>
<dbReference type="GeneID" id="93775210"/>
<dbReference type="KEGG" id="ssn:SSON_2035"/>
<dbReference type="HOGENOM" id="CLU_063037_0_1_6"/>
<dbReference type="Proteomes" id="UP000002529">
    <property type="component" value="Chromosome"/>
</dbReference>
<dbReference type="GO" id="GO:0005829">
    <property type="term" value="C:cytosol"/>
    <property type="evidence" value="ECO:0007669"/>
    <property type="project" value="TreeGrafter"/>
</dbReference>
<dbReference type="GO" id="GO:0004177">
    <property type="term" value="F:aminopeptidase activity"/>
    <property type="evidence" value="ECO:0007669"/>
    <property type="project" value="UniProtKB-UniRule"/>
</dbReference>
<dbReference type="GO" id="GO:0008237">
    <property type="term" value="F:metallopeptidase activity"/>
    <property type="evidence" value="ECO:0007669"/>
    <property type="project" value="UniProtKB-UniRule"/>
</dbReference>
<dbReference type="GO" id="GO:0008270">
    <property type="term" value="F:zinc ion binding"/>
    <property type="evidence" value="ECO:0007669"/>
    <property type="project" value="UniProtKB-UniRule"/>
</dbReference>
<dbReference type="GO" id="GO:0006508">
    <property type="term" value="P:proteolysis"/>
    <property type="evidence" value="ECO:0007669"/>
    <property type="project" value="UniProtKB-KW"/>
</dbReference>
<dbReference type="CDD" id="cd20169">
    <property type="entry name" value="Peptidase_M90_mtfA"/>
    <property type="match status" value="1"/>
</dbReference>
<dbReference type="FunFam" id="1.10.472.150:FF:000001">
    <property type="entry name" value="Protein MtfA"/>
    <property type="match status" value="1"/>
</dbReference>
<dbReference type="FunFam" id="3.40.390.10:FF:000012">
    <property type="entry name" value="Protein MtfA"/>
    <property type="match status" value="1"/>
</dbReference>
<dbReference type="Gene3D" id="3.40.390.10">
    <property type="entry name" value="Collagenase (Catalytic Domain)"/>
    <property type="match status" value="1"/>
</dbReference>
<dbReference type="Gene3D" id="1.10.472.150">
    <property type="entry name" value="Glucose-regulated metallo-peptidase M90, N-terminal domain"/>
    <property type="match status" value="1"/>
</dbReference>
<dbReference type="HAMAP" id="MF_01593">
    <property type="entry name" value="MtfA"/>
    <property type="match status" value="1"/>
</dbReference>
<dbReference type="InterPro" id="IPR024079">
    <property type="entry name" value="MetalloPept_cat_dom_sf"/>
</dbReference>
<dbReference type="InterPro" id="IPR057256">
    <property type="entry name" value="MtfA_enterob"/>
</dbReference>
<dbReference type="InterPro" id="IPR010384">
    <property type="entry name" value="MtfA_fam"/>
</dbReference>
<dbReference type="InterPro" id="IPR042252">
    <property type="entry name" value="MtfA_N"/>
</dbReference>
<dbReference type="NCBIfam" id="NF011939">
    <property type="entry name" value="PRK15410.1"/>
    <property type="match status" value="1"/>
</dbReference>
<dbReference type="PANTHER" id="PTHR30164">
    <property type="entry name" value="MTFA PEPTIDASE"/>
    <property type="match status" value="1"/>
</dbReference>
<dbReference type="PANTHER" id="PTHR30164:SF2">
    <property type="entry name" value="PROTEIN MTFA"/>
    <property type="match status" value="1"/>
</dbReference>
<dbReference type="Pfam" id="PF06167">
    <property type="entry name" value="Peptidase_M90"/>
    <property type="match status" value="1"/>
</dbReference>
<dbReference type="SUPFAM" id="SSF55486">
    <property type="entry name" value="Metalloproteases ('zincins'), catalytic domain"/>
    <property type="match status" value="1"/>
</dbReference>
<keyword id="KW-0031">Aminopeptidase</keyword>
<keyword id="KW-0963">Cytoplasm</keyword>
<keyword id="KW-0378">Hydrolase</keyword>
<keyword id="KW-0479">Metal-binding</keyword>
<keyword id="KW-0482">Metalloprotease</keyword>
<keyword id="KW-0645">Protease</keyword>
<keyword id="KW-1185">Reference proteome</keyword>
<keyword id="KW-0862">Zinc</keyword>
<evidence type="ECO:0000255" key="1">
    <source>
        <dbReference type="HAMAP-Rule" id="MF_01593"/>
    </source>
</evidence>
<evidence type="ECO:0000305" key="2"/>
<sequence length="265" mass="30233">MIKWPWKVQESAHQTALPWQEALSIPLLTGLTEQEQSKLVTLAERFLQQKRLVPLQGFELDSLRSCRIALLFCLPVLELGLEWLDGFHEVLIYPAPFVVDDEWEDDIGLVHNQRIVQSGQSWQQGPIVLNWLDIQDSFDASGFNLIIHEVAHKLDTRNGDRASGVPFIPLREVAGWEHDLHAAMNNIQEEIELVGENAASIDAYAASDPAECFAVLSEYFFSAPELFAPRFPSLWQRFCQFYQQDPLQRLHHANDTDSFSATNVH</sequence>
<organism>
    <name type="scientific">Shigella sonnei (strain Ss046)</name>
    <dbReference type="NCBI Taxonomy" id="300269"/>
    <lineage>
        <taxon>Bacteria</taxon>
        <taxon>Pseudomonadati</taxon>
        <taxon>Pseudomonadota</taxon>
        <taxon>Gammaproteobacteria</taxon>
        <taxon>Enterobacterales</taxon>
        <taxon>Enterobacteriaceae</taxon>
        <taxon>Shigella</taxon>
    </lineage>
</organism>
<protein>
    <recommendedName>
        <fullName evidence="1">Mlc titration factor A</fullName>
    </recommendedName>
    <alternativeName>
        <fullName evidence="1">Probable zinc metallopeptidase MtfA</fullName>
        <ecNumber evidence="1">3.4.11.-</ecNumber>
    </alternativeName>
</protein>
<gene>
    <name evidence="1" type="primary">mtfA</name>
    <name type="ordered locus">SSON_2035</name>
</gene>
<feature type="chain" id="PRO_0000316327" description="Mlc titration factor A">
    <location>
        <begin position="1"/>
        <end position="265"/>
    </location>
</feature>
<feature type="binding site" evidence="1">
    <location>
        <position position="111"/>
    </location>
    <ligand>
        <name>Zn(2+)</name>
        <dbReference type="ChEBI" id="CHEBI:29105"/>
    </ligand>
</feature>
<feature type="binding site" evidence="1">
    <location>
        <position position="148"/>
    </location>
    <ligand>
        <name>Zn(2+)</name>
        <dbReference type="ChEBI" id="CHEBI:29105"/>
    </ligand>
</feature>
<feature type="binding site" evidence="1">
    <location>
        <position position="152"/>
    </location>
    <ligand>
        <name>Zn(2+)</name>
        <dbReference type="ChEBI" id="CHEBI:29105"/>
    </ligand>
</feature>
<feature type="binding site" evidence="1">
    <location>
        <position position="211"/>
    </location>
    <ligand>
        <name>Zn(2+)</name>
        <dbReference type="ChEBI" id="CHEBI:29105"/>
    </ligand>
</feature>
<comment type="function">
    <text evidence="1">Involved in the modulation of the activity of the glucose-phosphotransferase system (glucose-PTS). Interacts with the transcriptional repressor Mlc, preventing its interaction with DNA and leading to the modulation of expression of genes regulated by Mlc, including ptsG, which encodes the PTS system glucose-specific EIICB component.</text>
</comment>
<comment type="function">
    <text evidence="1">Shows zinc-dependent metallopeptidase activity.</text>
</comment>
<comment type="cofactor">
    <cofactor evidence="1">
        <name>Zn(2+)</name>
        <dbReference type="ChEBI" id="CHEBI:29105"/>
    </cofactor>
    <text evidence="1">Binds 1 zinc ion per subunit.</text>
</comment>
<comment type="subunit">
    <text evidence="1">Interacts with Mlc.</text>
</comment>
<comment type="subcellular location">
    <subcellularLocation>
        <location evidence="1">Cytoplasm</location>
    </subcellularLocation>
</comment>
<comment type="similarity">
    <text evidence="1">Belongs to the MtfA family.</text>
</comment>
<comment type="sequence caution" evidence="2">
    <conflict type="erroneous initiation">
        <sequence resource="EMBL-CDS" id="AAZ88697"/>
    </conflict>
</comment>
<accession>Q3Z0L5</accession>